<dbReference type="EMBL" id="AJ222680">
    <property type="protein sequence ID" value="CAA10935.1"/>
    <property type="molecule type" value="Genomic_DNA"/>
</dbReference>
<dbReference type="SMR" id="O20968"/>
<dbReference type="GO" id="GO:0005743">
    <property type="term" value="C:mitochondrial inner membrane"/>
    <property type="evidence" value="ECO:0007669"/>
    <property type="project" value="UniProtKB-SubCell"/>
</dbReference>
<dbReference type="GO" id="GO:0045275">
    <property type="term" value="C:respiratory chain complex III"/>
    <property type="evidence" value="ECO:0007669"/>
    <property type="project" value="InterPro"/>
</dbReference>
<dbReference type="GO" id="GO:0046872">
    <property type="term" value="F:metal ion binding"/>
    <property type="evidence" value="ECO:0007669"/>
    <property type="project" value="UniProtKB-KW"/>
</dbReference>
<dbReference type="GO" id="GO:0008121">
    <property type="term" value="F:ubiquinol-cytochrome-c reductase activity"/>
    <property type="evidence" value="ECO:0007669"/>
    <property type="project" value="InterPro"/>
</dbReference>
<dbReference type="GO" id="GO:0006122">
    <property type="term" value="P:mitochondrial electron transport, ubiquinol to cytochrome c"/>
    <property type="evidence" value="ECO:0007669"/>
    <property type="project" value="TreeGrafter"/>
</dbReference>
<dbReference type="CDD" id="cd00290">
    <property type="entry name" value="cytochrome_b_C"/>
    <property type="match status" value="1"/>
</dbReference>
<dbReference type="CDD" id="cd00284">
    <property type="entry name" value="Cytochrome_b_N"/>
    <property type="match status" value="1"/>
</dbReference>
<dbReference type="FunFam" id="1.20.810.10:FF:000002">
    <property type="entry name" value="Cytochrome b"/>
    <property type="match status" value="1"/>
</dbReference>
<dbReference type="Gene3D" id="1.20.810.10">
    <property type="entry name" value="Cytochrome Bc1 Complex, Chain C"/>
    <property type="match status" value="1"/>
</dbReference>
<dbReference type="InterPro" id="IPR005798">
    <property type="entry name" value="Cyt_b/b6_C"/>
</dbReference>
<dbReference type="InterPro" id="IPR036150">
    <property type="entry name" value="Cyt_b/b6_C_sf"/>
</dbReference>
<dbReference type="InterPro" id="IPR005797">
    <property type="entry name" value="Cyt_b/b6_N"/>
</dbReference>
<dbReference type="InterPro" id="IPR027387">
    <property type="entry name" value="Cytb/b6-like_sf"/>
</dbReference>
<dbReference type="InterPro" id="IPR030689">
    <property type="entry name" value="Cytochrome_b"/>
</dbReference>
<dbReference type="InterPro" id="IPR048260">
    <property type="entry name" value="Cytochrome_b_C_euk/bac"/>
</dbReference>
<dbReference type="InterPro" id="IPR048259">
    <property type="entry name" value="Cytochrome_b_N_euk/bac"/>
</dbReference>
<dbReference type="InterPro" id="IPR016174">
    <property type="entry name" value="Di-haem_cyt_TM"/>
</dbReference>
<dbReference type="PANTHER" id="PTHR19271">
    <property type="entry name" value="CYTOCHROME B"/>
    <property type="match status" value="1"/>
</dbReference>
<dbReference type="PANTHER" id="PTHR19271:SF16">
    <property type="entry name" value="CYTOCHROME B"/>
    <property type="match status" value="1"/>
</dbReference>
<dbReference type="Pfam" id="PF00032">
    <property type="entry name" value="Cytochrom_B_C"/>
    <property type="match status" value="1"/>
</dbReference>
<dbReference type="Pfam" id="PF00033">
    <property type="entry name" value="Cytochrome_B"/>
    <property type="match status" value="1"/>
</dbReference>
<dbReference type="PIRSF" id="PIRSF038885">
    <property type="entry name" value="COB"/>
    <property type="match status" value="1"/>
</dbReference>
<dbReference type="SUPFAM" id="SSF81648">
    <property type="entry name" value="a domain/subunit of cytochrome bc1 complex (Ubiquinol-cytochrome c reductase)"/>
    <property type="match status" value="1"/>
</dbReference>
<dbReference type="SUPFAM" id="SSF81342">
    <property type="entry name" value="Transmembrane di-heme cytochromes"/>
    <property type="match status" value="1"/>
</dbReference>
<dbReference type="PROSITE" id="PS51003">
    <property type="entry name" value="CYTB_CTER"/>
    <property type="match status" value="1"/>
</dbReference>
<dbReference type="PROSITE" id="PS51002">
    <property type="entry name" value="CYTB_NTER"/>
    <property type="match status" value="1"/>
</dbReference>
<proteinExistence type="inferred from homology"/>
<name>CYB_TRASP</name>
<reference key="1">
    <citation type="journal article" date="1999" name="Mol. Phylogenet. Evol.">
        <title>The tribal radiation of the family Bovidae (Artiodactyla) and the evolution of the mitochondrial cytochrome b gene.</title>
        <authorList>
            <person name="Hassanin A."/>
            <person name="Douzery E.J.P."/>
        </authorList>
    </citation>
    <scope>NUCLEOTIDE SEQUENCE [GENOMIC DNA]</scope>
</reference>
<evidence type="ECO:0000250" key="1"/>
<evidence type="ECO:0000250" key="2">
    <source>
        <dbReference type="UniProtKB" id="P00157"/>
    </source>
</evidence>
<evidence type="ECO:0000255" key="3">
    <source>
        <dbReference type="PROSITE-ProRule" id="PRU00967"/>
    </source>
</evidence>
<evidence type="ECO:0000255" key="4">
    <source>
        <dbReference type="PROSITE-ProRule" id="PRU00968"/>
    </source>
</evidence>
<feature type="chain" id="PRO_0000061681" description="Cytochrome b">
    <location>
        <begin position="1"/>
        <end position="379"/>
    </location>
</feature>
<feature type="transmembrane region" description="Helical" evidence="2">
    <location>
        <begin position="33"/>
        <end position="53"/>
    </location>
</feature>
<feature type="transmembrane region" description="Helical" evidence="2">
    <location>
        <begin position="77"/>
        <end position="98"/>
    </location>
</feature>
<feature type="transmembrane region" description="Helical" evidence="2">
    <location>
        <begin position="113"/>
        <end position="133"/>
    </location>
</feature>
<feature type="transmembrane region" description="Helical" evidence="2">
    <location>
        <begin position="178"/>
        <end position="198"/>
    </location>
</feature>
<feature type="transmembrane region" description="Helical" evidence="2">
    <location>
        <begin position="226"/>
        <end position="246"/>
    </location>
</feature>
<feature type="transmembrane region" description="Helical" evidence="2">
    <location>
        <begin position="288"/>
        <end position="308"/>
    </location>
</feature>
<feature type="transmembrane region" description="Helical" evidence="2">
    <location>
        <begin position="320"/>
        <end position="340"/>
    </location>
</feature>
<feature type="transmembrane region" description="Helical" evidence="2">
    <location>
        <begin position="347"/>
        <end position="367"/>
    </location>
</feature>
<feature type="binding site" description="axial binding residue" evidence="2">
    <location>
        <position position="83"/>
    </location>
    <ligand>
        <name>heme b</name>
        <dbReference type="ChEBI" id="CHEBI:60344"/>
        <label>b562</label>
    </ligand>
    <ligandPart>
        <name>Fe</name>
        <dbReference type="ChEBI" id="CHEBI:18248"/>
    </ligandPart>
</feature>
<feature type="binding site" description="axial binding residue" evidence="2">
    <location>
        <position position="97"/>
    </location>
    <ligand>
        <name>heme b</name>
        <dbReference type="ChEBI" id="CHEBI:60344"/>
        <label>b566</label>
    </ligand>
    <ligandPart>
        <name>Fe</name>
        <dbReference type="ChEBI" id="CHEBI:18248"/>
    </ligandPart>
</feature>
<feature type="binding site" description="axial binding residue" evidence="2">
    <location>
        <position position="182"/>
    </location>
    <ligand>
        <name>heme b</name>
        <dbReference type="ChEBI" id="CHEBI:60344"/>
        <label>b562</label>
    </ligand>
    <ligandPart>
        <name>Fe</name>
        <dbReference type="ChEBI" id="CHEBI:18248"/>
    </ligandPart>
</feature>
<feature type="binding site" description="axial binding residue" evidence="2">
    <location>
        <position position="196"/>
    </location>
    <ligand>
        <name>heme b</name>
        <dbReference type="ChEBI" id="CHEBI:60344"/>
        <label>b566</label>
    </ligand>
    <ligandPart>
        <name>Fe</name>
        <dbReference type="ChEBI" id="CHEBI:18248"/>
    </ligandPart>
</feature>
<feature type="binding site" evidence="2">
    <location>
        <position position="201"/>
    </location>
    <ligand>
        <name>a ubiquinone</name>
        <dbReference type="ChEBI" id="CHEBI:16389"/>
    </ligand>
</feature>
<organism>
    <name type="scientific">Tragelaphus spekii</name>
    <name type="common">Sitatunga</name>
    <dbReference type="NCBI Taxonomy" id="69298"/>
    <lineage>
        <taxon>Eukaryota</taxon>
        <taxon>Metazoa</taxon>
        <taxon>Chordata</taxon>
        <taxon>Craniata</taxon>
        <taxon>Vertebrata</taxon>
        <taxon>Euteleostomi</taxon>
        <taxon>Mammalia</taxon>
        <taxon>Eutheria</taxon>
        <taxon>Laurasiatheria</taxon>
        <taxon>Artiodactyla</taxon>
        <taxon>Ruminantia</taxon>
        <taxon>Pecora</taxon>
        <taxon>Bovidae</taxon>
        <taxon>Bovinae</taxon>
        <taxon>Tragelaphus</taxon>
    </lineage>
</organism>
<accession>O20968</accession>
<comment type="function">
    <text evidence="2">Component of the ubiquinol-cytochrome c reductase complex (complex III or cytochrome b-c1 complex) that is part of the mitochondrial respiratory chain. The b-c1 complex mediates electron transfer from ubiquinol to cytochrome c. Contributes to the generation of a proton gradient across the mitochondrial membrane that is then used for ATP synthesis.</text>
</comment>
<comment type="cofactor">
    <cofactor evidence="2">
        <name>heme b</name>
        <dbReference type="ChEBI" id="CHEBI:60344"/>
    </cofactor>
    <text evidence="2">Binds 2 heme b groups non-covalently.</text>
</comment>
<comment type="subunit">
    <text evidence="2">The cytochrome bc1 complex contains 11 subunits: 3 respiratory subunits (MT-CYB, CYC1 and UQCRFS1), 2 core proteins (UQCRC1 and UQCRC2) and 6 low-molecular weight proteins (UQCRH/QCR6, UQCRB/QCR7, UQCRQ/QCR8, UQCR10/QCR9, UQCR11/QCR10 and a cleavage product of UQCRFS1). This cytochrome bc1 complex then forms a dimer.</text>
</comment>
<comment type="subcellular location">
    <subcellularLocation>
        <location evidence="2">Mitochondrion inner membrane</location>
        <topology evidence="2">Multi-pass membrane protein</topology>
    </subcellularLocation>
</comment>
<comment type="miscellaneous">
    <text evidence="1">Heme 1 (or BL or b562) is low-potential and absorbs at about 562 nm, and heme 2 (or BH or b566) is high-potential and absorbs at about 566 nm.</text>
</comment>
<comment type="similarity">
    <text evidence="3 4">Belongs to the cytochrome b family.</text>
</comment>
<comment type="caution">
    <text evidence="2">The full-length protein contains only eight transmembrane helices, not nine as predicted by bioinformatics tools.</text>
</comment>
<protein>
    <recommendedName>
        <fullName>Cytochrome b</fullName>
    </recommendedName>
    <alternativeName>
        <fullName>Complex III subunit 3</fullName>
    </alternativeName>
    <alternativeName>
        <fullName>Complex III subunit III</fullName>
    </alternativeName>
    <alternativeName>
        <fullName>Cytochrome b-c1 complex subunit 3</fullName>
    </alternativeName>
    <alternativeName>
        <fullName>Ubiquinol-cytochrome-c reductase complex cytochrome b subunit</fullName>
    </alternativeName>
</protein>
<sequence>MTNIRKSHPLMKIVNNAFIDLPAPSNISSWWNFGSLLGICLILQILTGLFLAMHYTSDTTTAFSSVTHICRDVNYGWIIRYMHANGASMFFICLYMHVGRGMYYGSYTFLETWNIGVILLFTVMATAFMGYVLPWGQMSFWGATVITNLLSAIPYIGTSLVEWIWGGFSVDKATLTRFFAFHFIFPFIIAALAMVHLLFLHETGSNNPTGISSDMDKIPFHPYYTIKDILGVLLLILTLMLLVLFAPDLLGDPDNYTPANPLITPPHIKPEWYFLFAYAILRSIPNKLGGVLALVLSILILILMPLLHVSKQRSMMFRPLSQCLFWILAADLLTLTWIGGQPVEHPYIIIGQLASIMYFLIILVLMPATSMIENNFLKW</sequence>
<gene>
    <name type="primary">MT-CYB</name>
    <name type="synonym">COB</name>
    <name type="synonym">CYTB</name>
    <name type="synonym">MTCYB</name>
</gene>
<keyword id="KW-0249">Electron transport</keyword>
<keyword id="KW-0349">Heme</keyword>
<keyword id="KW-0408">Iron</keyword>
<keyword id="KW-0472">Membrane</keyword>
<keyword id="KW-0479">Metal-binding</keyword>
<keyword id="KW-0496">Mitochondrion</keyword>
<keyword id="KW-0999">Mitochondrion inner membrane</keyword>
<keyword id="KW-0679">Respiratory chain</keyword>
<keyword id="KW-0812">Transmembrane</keyword>
<keyword id="KW-1133">Transmembrane helix</keyword>
<keyword id="KW-0813">Transport</keyword>
<keyword id="KW-0830">Ubiquinone</keyword>
<geneLocation type="mitochondrion"/>